<gene>
    <name evidence="1" type="primary">efp</name>
    <name type="ordered locus">YPK_3818</name>
</gene>
<dbReference type="EMBL" id="CP000950">
    <property type="protein sequence ID" value="ACA70084.1"/>
    <property type="molecule type" value="Genomic_DNA"/>
</dbReference>
<dbReference type="RefSeq" id="WP_002209131.1">
    <property type="nucleotide sequence ID" value="NZ_CP009792.1"/>
</dbReference>
<dbReference type="SMR" id="B1JMQ7"/>
<dbReference type="GeneID" id="57974254"/>
<dbReference type="KEGG" id="ypy:YPK_3818"/>
<dbReference type="PATRIC" id="fig|502800.11.peg.166"/>
<dbReference type="UniPathway" id="UPA00345"/>
<dbReference type="GO" id="GO:0005737">
    <property type="term" value="C:cytoplasm"/>
    <property type="evidence" value="ECO:0007669"/>
    <property type="project" value="UniProtKB-SubCell"/>
</dbReference>
<dbReference type="GO" id="GO:0003746">
    <property type="term" value="F:translation elongation factor activity"/>
    <property type="evidence" value="ECO:0007669"/>
    <property type="project" value="UniProtKB-UniRule"/>
</dbReference>
<dbReference type="GO" id="GO:0043043">
    <property type="term" value="P:peptide biosynthetic process"/>
    <property type="evidence" value="ECO:0007669"/>
    <property type="project" value="InterPro"/>
</dbReference>
<dbReference type="CDD" id="cd04470">
    <property type="entry name" value="S1_EF-P_repeat_1"/>
    <property type="match status" value="1"/>
</dbReference>
<dbReference type="CDD" id="cd05794">
    <property type="entry name" value="S1_EF-P_repeat_2"/>
    <property type="match status" value="1"/>
</dbReference>
<dbReference type="FunFam" id="2.30.30.30:FF:000003">
    <property type="entry name" value="Elongation factor P"/>
    <property type="match status" value="1"/>
</dbReference>
<dbReference type="FunFam" id="2.40.50.140:FF:000004">
    <property type="entry name" value="Elongation factor P"/>
    <property type="match status" value="1"/>
</dbReference>
<dbReference type="FunFam" id="2.40.50.140:FF:000009">
    <property type="entry name" value="Elongation factor P"/>
    <property type="match status" value="1"/>
</dbReference>
<dbReference type="Gene3D" id="2.30.30.30">
    <property type="match status" value="1"/>
</dbReference>
<dbReference type="Gene3D" id="2.40.50.140">
    <property type="entry name" value="Nucleic acid-binding proteins"/>
    <property type="match status" value="2"/>
</dbReference>
<dbReference type="HAMAP" id="MF_00141">
    <property type="entry name" value="EF_P"/>
    <property type="match status" value="1"/>
</dbReference>
<dbReference type="InterPro" id="IPR015365">
    <property type="entry name" value="Elong-fact-P_C"/>
</dbReference>
<dbReference type="InterPro" id="IPR012340">
    <property type="entry name" value="NA-bd_OB-fold"/>
</dbReference>
<dbReference type="InterPro" id="IPR014722">
    <property type="entry name" value="Rib_uL2_dom2"/>
</dbReference>
<dbReference type="InterPro" id="IPR020599">
    <property type="entry name" value="Transl_elong_fac_P/YeiP"/>
</dbReference>
<dbReference type="InterPro" id="IPR013185">
    <property type="entry name" value="Transl_elong_KOW-like"/>
</dbReference>
<dbReference type="InterPro" id="IPR001059">
    <property type="entry name" value="Transl_elong_P/YeiP_cen"/>
</dbReference>
<dbReference type="InterPro" id="IPR013852">
    <property type="entry name" value="Transl_elong_P/YeiP_CS"/>
</dbReference>
<dbReference type="InterPro" id="IPR011768">
    <property type="entry name" value="Transl_elongation_fac_P"/>
</dbReference>
<dbReference type="InterPro" id="IPR008991">
    <property type="entry name" value="Translation_prot_SH3-like_sf"/>
</dbReference>
<dbReference type="NCBIfam" id="TIGR00038">
    <property type="entry name" value="efp"/>
    <property type="match status" value="1"/>
</dbReference>
<dbReference type="NCBIfam" id="NF001810">
    <property type="entry name" value="PRK00529.1"/>
    <property type="match status" value="1"/>
</dbReference>
<dbReference type="PANTHER" id="PTHR30053">
    <property type="entry name" value="ELONGATION FACTOR P"/>
    <property type="match status" value="1"/>
</dbReference>
<dbReference type="PANTHER" id="PTHR30053:SF12">
    <property type="entry name" value="ELONGATION FACTOR P (EF-P) FAMILY PROTEIN"/>
    <property type="match status" value="1"/>
</dbReference>
<dbReference type="Pfam" id="PF01132">
    <property type="entry name" value="EFP"/>
    <property type="match status" value="1"/>
</dbReference>
<dbReference type="Pfam" id="PF08207">
    <property type="entry name" value="EFP_N"/>
    <property type="match status" value="1"/>
</dbReference>
<dbReference type="Pfam" id="PF09285">
    <property type="entry name" value="Elong-fact-P_C"/>
    <property type="match status" value="1"/>
</dbReference>
<dbReference type="PIRSF" id="PIRSF005901">
    <property type="entry name" value="EF-P"/>
    <property type="match status" value="1"/>
</dbReference>
<dbReference type="SMART" id="SM01185">
    <property type="entry name" value="EFP"/>
    <property type="match status" value="1"/>
</dbReference>
<dbReference type="SMART" id="SM00841">
    <property type="entry name" value="Elong-fact-P_C"/>
    <property type="match status" value="1"/>
</dbReference>
<dbReference type="SUPFAM" id="SSF50249">
    <property type="entry name" value="Nucleic acid-binding proteins"/>
    <property type="match status" value="2"/>
</dbReference>
<dbReference type="SUPFAM" id="SSF50104">
    <property type="entry name" value="Translation proteins SH3-like domain"/>
    <property type="match status" value="1"/>
</dbReference>
<dbReference type="PROSITE" id="PS01275">
    <property type="entry name" value="EFP"/>
    <property type="match status" value="1"/>
</dbReference>
<protein>
    <recommendedName>
        <fullName evidence="1">Elongation factor P</fullName>
        <shortName evidence="1">EF-P</shortName>
    </recommendedName>
</protein>
<evidence type="ECO:0000255" key="1">
    <source>
        <dbReference type="HAMAP-Rule" id="MF_00141"/>
    </source>
</evidence>
<comment type="function">
    <text evidence="1">Involved in peptide bond synthesis. Alleviates ribosome stalling that occurs when 3 or more consecutive Pro residues or the sequence PPG is present in a protein, possibly by augmenting the peptidyl transferase activity of the ribosome. Modification of Lys-34 is required for alleviation.</text>
</comment>
<comment type="pathway">
    <text evidence="1">Protein biosynthesis; polypeptide chain elongation.</text>
</comment>
<comment type="subcellular location">
    <subcellularLocation>
        <location evidence="1">Cytoplasm</location>
    </subcellularLocation>
</comment>
<comment type="PTM">
    <text evidence="1">May be beta-lysylated on the epsilon-amino group of Lys-34 by the combined action of EpmA and EpmB, and then hydroxylated on the C5 position of the same residue by EpmC (if this protein is present). Lysylation is critical for the stimulatory effect of EF-P on peptide-bond formation. The lysylation moiety may extend toward the peptidyltransferase center and stabilize the terminal 3-CCA end of the tRNA. Hydroxylation of the C5 position on Lys-34 may allow additional potential stabilizing hydrogen-bond interactions with the P-tRNA.</text>
</comment>
<comment type="similarity">
    <text evidence="1">Belongs to the elongation factor P family.</text>
</comment>
<organism>
    <name type="scientific">Yersinia pseudotuberculosis serotype O:3 (strain YPIII)</name>
    <dbReference type="NCBI Taxonomy" id="502800"/>
    <lineage>
        <taxon>Bacteria</taxon>
        <taxon>Pseudomonadati</taxon>
        <taxon>Pseudomonadota</taxon>
        <taxon>Gammaproteobacteria</taxon>
        <taxon>Enterobacterales</taxon>
        <taxon>Yersiniaceae</taxon>
        <taxon>Yersinia</taxon>
    </lineage>
</organism>
<reference key="1">
    <citation type="submission" date="2008-02" db="EMBL/GenBank/DDBJ databases">
        <title>Complete sequence of Yersinia pseudotuberculosis YPIII.</title>
        <authorList>
            <consortium name="US DOE Joint Genome Institute"/>
            <person name="Copeland A."/>
            <person name="Lucas S."/>
            <person name="Lapidus A."/>
            <person name="Glavina del Rio T."/>
            <person name="Dalin E."/>
            <person name="Tice H."/>
            <person name="Bruce D."/>
            <person name="Goodwin L."/>
            <person name="Pitluck S."/>
            <person name="Munk A.C."/>
            <person name="Brettin T."/>
            <person name="Detter J.C."/>
            <person name="Han C."/>
            <person name="Tapia R."/>
            <person name="Schmutz J."/>
            <person name="Larimer F."/>
            <person name="Land M."/>
            <person name="Hauser L."/>
            <person name="Challacombe J.F."/>
            <person name="Green L."/>
            <person name="Lindler L.E."/>
            <person name="Nikolich M.P."/>
            <person name="Richardson P."/>
        </authorList>
    </citation>
    <scope>NUCLEOTIDE SEQUENCE [LARGE SCALE GENOMIC DNA]</scope>
    <source>
        <strain>YPIII</strain>
    </source>
</reference>
<accession>B1JMQ7</accession>
<feature type="chain" id="PRO_1000096230" description="Elongation factor P">
    <location>
        <begin position="1"/>
        <end position="188"/>
    </location>
</feature>
<feature type="modified residue" description="N6-(3,6-diaminohexanoyl)-5-hydroxylysine" evidence="1">
    <location>
        <position position="34"/>
    </location>
</feature>
<name>EFP_YERPY</name>
<keyword id="KW-0963">Cytoplasm</keyword>
<keyword id="KW-0251">Elongation factor</keyword>
<keyword id="KW-0379">Hydroxylation</keyword>
<keyword id="KW-0648">Protein biosynthesis</keyword>
<sequence length="188" mass="20711">MASYYSNDFRPGLKIMFEGEPYAVESSEFVKPGKGQAFARVKMRRLLTGGRVEKTFKSTDSLEGADVNDMNLTYLYNDGEFWHFMNNETYEQLQADAKAVGDNGKWLIDQAECIVTLWNGQPIAVTPPNFVELEIVDTDPGLKGDTAGTGGKPATLSTGAVVKVPLFVQVGEIIKVDTRSGEYVSRVK</sequence>
<proteinExistence type="inferred from homology"/>